<name>P43_XENBO</name>
<dbReference type="EMBL" id="M32471">
    <property type="protein sequence ID" value="AAA49712.1"/>
    <property type="molecule type" value="mRNA"/>
</dbReference>
<dbReference type="PIR" id="A34895">
    <property type="entry name" value="A34895"/>
</dbReference>
<dbReference type="SMR" id="P25066"/>
<dbReference type="GO" id="GO:0005634">
    <property type="term" value="C:nucleus"/>
    <property type="evidence" value="ECO:0007669"/>
    <property type="project" value="TreeGrafter"/>
</dbReference>
<dbReference type="GO" id="GO:0003723">
    <property type="term" value="F:RNA binding"/>
    <property type="evidence" value="ECO:0007669"/>
    <property type="project" value="UniProtKB-KW"/>
</dbReference>
<dbReference type="GO" id="GO:0008270">
    <property type="term" value="F:zinc ion binding"/>
    <property type="evidence" value="ECO:0007669"/>
    <property type="project" value="UniProtKB-KW"/>
</dbReference>
<dbReference type="Gene3D" id="3.30.160.60">
    <property type="entry name" value="Classic Zinc Finger"/>
    <property type="match status" value="5"/>
</dbReference>
<dbReference type="InterPro" id="IPR054599">
    <property type="entry name" value="TFIIIA_Zfn-C2H2"/>
</dbReference>
<dbReference type="InterPro" id="IPR051061">
    <property type="entry name" value="Zinc_finger_trans_reg"/>
</dbReference>
<dbReference type="InterPro" id="IPR036236">
    <property type="entry name" value="Znf_C2H2_sf"/>
</dbReference>
<dbReference type="InterPro" id="IPR013087">
    <property type="entry name" value="Znf_C2H2_type"/>
</dbReference>
<dbReference type="PANTHER" id="PTHR46179:SF28">
    <property type="entry name" value="SI:DKEY-208K4.2 PROTEIN"/>
    <property type="match status" value="1"/>
</dbReference>
<dbReference type="PANTHER" id="PTHR46179">
    <property type="entry name" value="ZINC FINGER PROTEIN"/>
    <property type="match status" value="1"/>
</dbReference>
<dbReference type="Pfam" id="PF22110">
    <property type="entry name" value="TFIIIA_zf-C2H2"/>
    <property type="match status" value="1"/>
</dbReference>
<dbReference type="Pfam" id="PF00096">
    <property type="entry name" value="zf-C2H2"/>
    <property type="match status" value="3"/>
</dbReference>
<dbReference type="SMART" id="SM00355">
    <property type="entry name" value="ZnF_C2H2"/>
    <property type="match status" value="9"/>
</dbReference>
<dbReference type="SUPFAM" id="SSF57667">
    <property type="entry name" value="beta-beta-alpha zinc fingers"/>
    <property type="match status" value="4"/>
</dbReference>
<dbReference type="PROSITE" id="PS00028">
    <property type="entry name" value="ZINC_FINGER_C2H2_1"/>
    <property type="match status" value="7"/>
</dbReference>
<dbReference type="PROSITE" id="PS50157">
    <property type="entry name" value="ZINC_FINGER_C2H2_2"/>
    <property type="match status" value="7"/>
</dbReference>
<reference key="1">
    <citation type="journal article" date="1990" name="Cell">
        <title>A finger protein structurally similar to TFIIIA that binds exclusively to 5S RNA in Xenopus.</title>
        <authorList>
            <person name="Joho K.E."/>
            <person name="Darby M.K."/>
            <person name="Crawford E.T."/>
            <person name="Brown D.D."/>
        </authorList>
    </citation>
    <scope>NUCLEOTIDE SEQUENCE [MRNA]</scope>
</reference>
<feature type="chain" id="PRO_0000047088" description="P43 5S RNA-binding protein">
    <location>
        <begin position="1"/>
        <end position="365"/>
    </location>
</feature>
<feature type="zinc finger region" description="C2H2-type 1" evidence="1">
    <location>
        <begin position="15"/>
        <end position="39"/>
    </location>
</feature>
<feature type="zinc finger region" description="C2H2-type 2" evidence="1">
    <location>
        <begin position="45"/>
        <end position="69"/>
    </location>
</feature>
<feature type="zinc finger region" description="C2H2-type 3" evidence="1">
    <location>
        <begin position="75"/>
        <end position="100"/>
    </location>
</feature>
<feature type="zinc finger region" description="C2H2-type 4" evidence="1">
    <location>
        <begin position="106"/>
        <end position="130"/>
    </location>
</feature>
<feature type="zinc finger region" description="C2H2-type 5" evidence="1">
    <location>
        <begin position="136"/>
        <end position="160"/>
    </location>
</feature>
<feature type="zinc finger region" description="C2H2-type 6" evidence="1">
    <location>
        <begin position="163"/>
        <end position="187"/>
    </location>
</feature>
<feature type="zinc finger region" description="C2H2-type 7" evidence="1">
    <location>
        <begin position="191"/>
        <end position="213"/>
    </location>
</feature>
<feature type="zinc finger region" description="C2H2-type 8" evidence="1">
    <location>
        <begin position="220"/>
        <end position="245"/>
    </location>
</feature>
<feature type="zinc finger region" description="C2H2-type 9" evidence="1">
    <location>
        <begin position="251"/>
        <end position="275"/>
    </location>
</feature>
<organism>
    <name type="scientific">Xenopus borealis</name>
    <name type="common">Kenyan clawed frog</name>
    <dbReference type="NCBI Taxonomy" id="8354"/>
    <lineage>
        <taxon>Eukaryota</taxon>
        <taxon>Metazoa</taxon>
        <taxon>Chordata</taxon>
        <taxon>Craniata</taxon>
        <taxon>Vertebrata</taxon>
        <taxon>Euteleostomi</taxon>
        <taxon>Amphibia</taxon>
        <taxon>Batrachia</taxon>
        <taxon>Anura</taxon>
        <taxon>Pipoidea</taxon>
        <taxon>Pipidae</taxon>
        <taxon>Xenopodinae</taxon>
        <taxon>Xenopus</taxon>
        <taxon>Xenopus</taxon>
    </lineage>
</organism>
<comment type="function">
    <text>p43 is a 5S RNA binding protein which is a major constituent of oocytes and comprises part of a 42S ribonucleoprotein storage particle.</text>
</comment>
<comment type="subunit">
    <text>The 42S RNP particle comprises four subunits each of which contains one molecule of 5S RNA, three molecules of tRNA, two molecules of p50 (EF1-alpha) and one molecule of the 5S RNA binding protein 43.</text>
</comment>
<proteinExistence type="evidence at transcript level"/>
<accession>P25066</accession>
<evidence type="ECO:0000255" key="1">
    <source>
        <dbReference type="PROSITE-ProRule" id="PRU00042"/>
    </source>
</evidence>
<keyword id="KW-0479">Metal-binding</keyword>
<keyword id="KW-0677">Repeat</keyword>
<keyword id="KW-0694">RNA-binding</keyword>
<keyword id="KW-0862">Zinc</keyword>
<keyword id="KW-0863">Zinc-finger</keyword>
<sequence length="365" mass="41727">MQNVGPTEPSKSQVFRCPAAGCKAVYRKEGKLRDHMAGHSEQKLWKCGKKDCGKMFARKRQIQKHMKRHLTLKKHSCPTAGCKMTFSTKKSLSRHKLYKHGDAVPLKCSVPGCKRSFRKKRALRIHVSEHSNEPLSVCDVPGCGWKSTSAAKLAAHHRRHGGYRCSYEDCQTVSPTWTALQTHLKKHPLELQCAACKKPFKKASALRRHKATHAKNPLQLPCPRQDCDKIFSTVFNLTHHLRKVHLCLQTHRCPHSNCTRSFAMRESLVRHLVVHDPERKKLKLKFGRRPSKFLGRGTRCPTPVVEEDLSHLFSRKLLFHYKTRLETNLSGLFNERQLREPAEPEVNLSGLFQLPQGRPKAEKAA</sequence>
<protein>
    <recommendedName>
        <fullName>P43 5S RNA-binding protein</fullName>
    </recommendedName>
    <alternativeName>
        <fullName>42S P43</fullName>
    </alternativeName>
    <alternativeName>
        <fullName>Thesaurin-B</fullName>
    </alternativeName>
</protein>